<sequence>MSSSRRSRTSSRLAAAPPPTDEQMAELISKLQAVLPTRGGEANAKQASSAEVLQEACRYIRRLHREADALSERLAELLLLQPSDLAINGADVPDLIRSLLM</sequence>
<name>ILI2_ORYSJ</name>
<proteinExistence type="inferred from homology"/>
<evidence type="ECO:0000250" key="1"/>
<evidence type="ECO:0000256" key="2">
    <source>
        <dbReference type="SAM" id="MobiDB-lite"/>
    </source>
</evidence>
<reference key="1">
    <citation type="journal article" date="2005" name="BMC Biol.">
        <title>The sequence of rice chromosomes 11 and 12, rich in disease resistance genes and recent gene duplications.</title>
        <authorList>
            <consortium name="The rice chromosomes 11 and 12 sequencing consortia"/>
        </authorList>
    </citation>
    <scope>NUCLEOTIDE SEQUENCE [LARGE SCALE GENOMIC DNA]</scope>
    <source>
        <strain>cv. Nipponbare</strain>
    </source>
</reference>
<reference key="2">
    <citation type="journal article" date="2005" name="Nature">
        <title>The map-based sequence of the rice genome.</title>
        <authorList>
            <consortium name="International rice genome sequencing project (IRGSP)"/>
        </authorList>
    </citation>
    <scope>NUCLEOTIDE SEQUENCE [LARGE SCALE GENOMIC DNA]</scope>
    <source>
        <strain>cv. Nipponbare</strain>
    </source>
</reference>
<reference key="3">
    <citation type="journal article" date="2008" name="Nucleic Acids Res.">
        <title>The rice annotation project database (RAP-DB): 2008 update.</title>
        <authorList>
            <consortium name="The rice annotation project (RAP)"/>
        </authorList>
    </citation>
    <scope>GENOME REANNOTATION</scope>
    <source>
        <strain>cv. Nipponbare</strain>
    </source>
</reference>
<reference key="4">
    <citation type="journal article" date="2013" name="Rice">
        <title>Improvement of the Oryza sativa Nipponbare reference genome using next generation sequence and optical map data.</title>
        <authorList>
            <person name="Kawahara Y."/>
            <person name="de la Bastide M."/>
            <person name="Hamilton J.P."/>
            <person name="Kanamori H."/>
            <person name="McCombie W.R."/>
            <person name="Ouyang S."/>
            <person name="Schwartz D.C."/>
            <person name="Tanaka T."/>
            <person name="Wu J."/>
            <person name="Zhou S."/>
            <person name="Childs K.L."/>
            <person name="Davidson R.M."/>
            <person name="Lin H."/>
            <person name="Quesada-Ocampo L."/>
            <person name="Vaillancourt B."/>
            <person name="Sakai H."/>
            <person name="Lee S.S."/>
            <person name="Kim J."/>
            <person name="Numa H."/>
            <person name="Itoh T."/>
            <person name="Buell C.R."/>
            <person name="Matsumoto T."/>
        </authorList>
    </citation>
    <scope>GENOME REANNOTATION</scope>
    <source>
        <strain>cv. Nipponbare</strain>
    </source>
</reference>
<reference key="5">
    <citation type="journal article" date="2003" name="Science">
        <title>Collection, mapping, and annotation of over 28,000 cDNA clones from japonica rice.</title>
        <authorList>
            <consortium name="The rice full-length cDNA consortium"/>
        </authorList>
    </citation>
    <scope>NUCLEOTIDE SEQUENCE [LARGE SCALE MRNA]</scope>
    <source>
        <strain>cv. Nipponbare</strain>
    </source>
</reference>
<protein>
    <recommendedName>
        <fullName>Transcription factor ILI2</fullName>
        <shortName>OsILI2</shortName>
    </recommendedName>
    <alternativeName>
        <fullName>Protein INCREASED LEAF INCLINATION 2</fullName>
    </alternativeName>
</protein>
<organism>
    <name type="scientific">Oryza sativa subsp. japonica</name>
    <name type="common">Rice</name>
    <dbReference type="NCBI Taxonomy" id="39947"/>
    <lineage>
        <taxon>Eukaryota</taxon>
        <taxon>Viridiplantae</taxon>
        <taxon>Streptophyta</taxon>
        <taxon>Embryophyta</taxon>
        <taxon>Tracheophyta</taxon>
        <taxon>Spermatophyta</taxon>
        <taxon>Magnoliopsida</taxon>
        <taxon>Liliopsida</taxon>
        <taxon>Poales</taxon>
        <taxon>Poaceae</taxon>
        <taxon>BOP clade</taxon>
        <taxon>Oryzoideae</taxon>
        <taxon>Oryzeae</taxon>
        <taxon>Oryzinae</taxon>
        <taxon>Oryza</taxon>
        <taxon>Oryza sativa</taxon>
    </lineage>
</organism>
<feature type="chain" id="PRO_0000429090" description="Transcription factor ILI2">
    <location>
        <begin position="1"/>
        <end position="101"/>
    </location>
</feature>
<feature type="domain" description="bHLH" evidence="1">
    <location>
        <begin position="8"/>
        <end position="63"/>
    </location>
</feature>
<feature type="region of interest" description="Disordered" evidence="2">
    <location>
        <begin position="1"/>
        <end position="22"/>
    </location>
</feature>
<dbReference type="EMBL" id="DP000010">
    <property type="protein sequence ID" value="ABA94608.1"/>
    <property type="molecule type" value="Genomic_DNA"/>
</dbReference>
<dbReference type="EMBL" id="AP008217">
    <property type="protein sequence ID" value="BAF28599.1"/>
    <property type="molecule type" value="Genomic_DNA"/>
</dbReference>
<dbReference type="EMBL" id="AP014967">
    <property type="protein sequence ID" value="BAT14773.1"/>
    <property type="molecule type" value="Genomic_DNA"/>
</dbReference>
<dbReference type="EMBL" id="AK111303">
    <property type="protein sequence ID" value="BAG99204.1"/>
    <property type="molecule type" value="mRNA"/>
</dbReference>
<dbReference type="RefSeq" id="XP_015616700.1">
    <property type="nucleotide sequence ID" value="XM_015761214.1"/>
</dbReference>
<dbReference type="SMR" id="Q2R1J3"/>
<dbReference type="FunCoup" id="Q2R1J3">
    <property type="interactions" value="119"/>
</dbReference>
<dbReference type="PaxDb" id="39947-Q2R1J3"/>
<dbReference type="EnsemblPlants" id="Os11t0603000-01">
    <property type="protein sequence ID" value="Os11t0603000-01"/>
    <property type="gene ID" value="Os11g0603000"/>
</dbReference>
<dbReference type="Gramene" id="Os11t0603000-01">
    <property type="protein sequence ID" value="Os11t0603000-01"/>
    <property type="gene ID" value="Os11g0603000"/>
</dbReference>
<dbReference type="KEGG" id="dosa:Os11g0603000"/>
<dbReference type="HOGENOM" id="CLU_183267_0_0_1"/>
<dbReference type="InParanoid" id="Q2R1J3"/>
<dbReference type="OMA" id="ATHITTY"/>
<dbReference type="OrthoDB" id="673935at2759"/>
<dbReference type="PlantReactome" id="R-OSA-9826782">
    <property type="pathway name" value="Regulation of seed germination and coleoptile growth under submergence and normal gravity environment"/>
</dbReference>
<dbReference type="Proteomes" id="UP000000763">
    <property type="component" value="Chromosome 11"/>
</dbReference>
<dbReference type="Proteomes" id="UP000059680">
    <property type="component" value="Chromosome 11"/>
</dbReference>
<dbReference type="GO" id="GO:0046983">
    <property type="term" value="F:protein dimerization activity"/>
    <property type="evidence" value="ECO:0007669"/>
    <property type="project" value="InterPro"/>
</dbReference>
<dbReference type="GO" id="GO:0006355">
    <property type="term" value="P:regulation of DNA-templated transcription"/>
    <property type="evidence" value="ECO:0007669"/>
    <property type="project" value="InterPro"/>
</dbReference>
<dbReference type="GO" id="GO:0040008">
    <property type="term" value="P:regulation of growth"/>
    <property type="evidence" value="ECO:0007669"/>
    <property type="project" value="InterPro"/>
</dbReference>
<dbReference type="Gene3D" id="4.10.280.10">
    <property type="entry name" value="Helix-loop-helix DNA-binding domain"/>
    <property type="match status" value="1"/>
</dbReference>
<dbReference type="InterPro" id="IPR036638">
    <property type="entry name" value="HLH_DNA-bd_sf"/>
</dbReference>
<dbReference type="InterPro" id="IPR044172">
    <property type="entry name" value="ILI2-like"/>
</dbReference>
<dbReference type="InterPro" id="IPR044293">
    <property type="entry name" value="PRE"/>
</dbReference>
<dbReference type="PANTHER" id="PTHR38546">
    <property type="entry name" value="DNA BINDING PROTEIN"/>
    <property type="match status" value="1"/>
</dbReference>
<dbReference type="PANTHER" id="PTHR38546:SF5">
    <property type="entry name" value="TRANSCRIPTION FACTOR ILI2"/>
    <property type="match status" value="1"/>
</dbReference>
<dbReference type="Pfam" id="PF23174">
    <property type="entry name" value="bHLH_ILI"/>
    <property type="match status" value="1"/>
</dbReference>
<dbReference type="SUPFAM" id="SSF47459">
    <property type="entry name" value="HLH, helix-loop-helix DNA-binding domain"/>
    <property type="match status" value="1"/>
</dbReference>
<gene>
    <name type="primary">ILI2</name>
    <name type="ordered locus">LOC_Os11g39000</name>
    <name type="ordered locus">Os11g0603000</name>
</gene>
<keyword id="KW-0341">Growth regulation</keyword>
<keyword id="KW-1185">Reference proteome</keyword>
<keyword id="KW-0804">Transcription</keyword>
<keyword id="KW-0805">Transcription regulation</keyword>
<comment type="function">
    <text evidence="1">Atypical and probable non DNA-binding bHLH transcription factor that integrates multiple signaling pathways to regulate cell elongation and plant development.</text>
</comment>
<comment type="similarity">
    <text>Belongs to the bHLH protein family.</text>
</comment>
<accession>Q2R1J3</accession>
<accession>A0A0P0Y4F7</accession>